<name>6PGD_CUNEL</name>
<feature type="chain" id="PRO_0000090073" description="6-phosphogluconate dehydrogenase, decarboxylating">
    <location>
        <begin position="1"/>
        <end position="485"/>
    </location>
</feature>
<feature type="active site" description="Proton acceptor" evidence="1">
    <location>
        <position position="186"/>
    </location>
</feature>
<feature type="active site" description="Proton donor" evidence="1">
    <location>
        <position position="193"/>
    </location>
</feature>
<feature type="binding site" evidence="1">
    <location>
        <begin position="12"/>
        <end position="17"/>
    </location>
    <ligand>
        <name>NADP(+)</name>
        <dbReference type="ChEBI" id="CHEBI:58349"/>
    </ligand>
</feature>
<feature type="binding site" evidence="1">
    <location>
        <begin position="35"/>
        <end position="37"/>
    </location>
    <ligand>
        <name>NADP(+)</name>
        <dbReference type="ChEBI" id="CHEBI:58349"/>
    </ligand>
</feature>
<feature type="binding site" evidence="1">
    <location>
        <begin position="77"/>
        <end position="79"/>
    </location>
    <ligand>
        <name>NADP(+)</name>
        <dbReference type="ChEBI" id="CHEBI:58349"/>
    </ligand>
</feature>
<feature type="binding site" evidence="1">
    <location>
        <position position="105"/>
    </location>
    <ligand>
        <name>NADP(+)</name>
        <dbReference type="ChEBI" id="CHEBI:58349"/>
    </ligand>
</feature>
<feature type="binding site" description="in other chain" evidence="1">
    <location>
        <position position="105"/>
    </location>
    <ligand>
        <name>substrate</name>
        <note>ligand shared between dimeric partners</note>
    </ligand>
</feature>
<feature type="binding site" description="in other chain" evidence="1">
    <location>
        <begin position="131"/>
        <end position="133"/>
    </location>
    <ligand>
        <name>substrate</name>
        <note>ligand shared between dimeric partners</note>
    </ligand>
</feature>
<feature type="binding site" description="in other chain" evidence="1">
    <location>
        <begin position="189"/>
        <end position="190"/>
    </location>
    <ligand>
        <name>substrate</name>
        <note>ligand shared between dimeric partners</note>
    </ligand>
</feature>
<feature type="binding site" description="in other chain" evidence="1">
    <location>
        <position position="194"/>
    </location>
    <ligand>
        <name>substrate</name>
        <note>ligand shared between dimeric partners</note>
    </ligand>
</feature>
<feature type="binding site" description="in other chain" evidence="1">
    <location>
        <position position="263"/>
    </location>
    <ligand>
        <name>substrate</name>
        <note>ligand shared between dimeric partners</note>
    </ligand>
</feature>
<feature type="binding site" description="in other chain" evidence="1">
    <location>
        <position position="290"/>
    </location>
    <ligand>
        <name>substrate</name>
        <note>ligand shared between dimeric partners</note>
    </ligand>
</feature>
<feature type="binding site" evidence="1">
    <location>
        <position position="449"/>
    </location>
    <ligand>
        <name>substrate</name>
        <note>ligand shared between dimeric partners</note>
    </ligand>
</feature>
<feature type="binding site" evidence="1">
    <location>
        <position position="455"/>
    </location>
    <ligand>
        <name>substrate</name>
        <note>ligand shared between dimeric partners</note>
    </ligand>
</feature>
<dbReference type="EC" id="1.1.1.44"/>
<dbReference type="EMBL" id="Y17297">
    <property type="protein sequence ID" value="CAA76734.1"/>
    <property type="molecule type" value="mRNA"/>
</dbReference>
<dbReference type="SMR" id="O60037"/>
<dbReference type="UniPathway" id="UPA00115">
    <property type="reaction ID" value="UER00410"/>
</dbReference>
<dbReference type="GO" id="GO:0050661">
    <property type="term" value="F:NADP binding"/>
    <property type="evidence" value="ECO:0007669"/>
    <property type="project" value="InterPro"/>
</dbReference>
<dbReference type="GO" id="GO:0004616">
    <property type="term" value="F:phosphogluconate dehydrogenase (decarboxylating) activity"/>
    <property type="evidence" value="ECO:0007669"/>
    <property type="project" value="UniProtKB-EC"/>
</dbReference>
<dbReference type="GO" id="GO:0019521">
    <property type="term" value="P:D-gluconate metabolic process"/>
    <property type="evidence" value="ECO:0007669"/>
    <property type="project" value="UniProtKB-KW"/>
</dbReference>
<dbReference type="GO" id="GO:0006098">
    <property type="term" value="P:pentose-phosphate shunt"/>
    <property type="evidence" value="ECO:0007669"/>
    <property type="project" value="UniProtKB-UniPathway"/>
</dbReference>
<dbReference type="FunFam" id="1.10.1040.10:FF:000002">
    <property type="entry name" value="6-phosphogluconate dehydrogenase, decarboxylating"/>
    <property type="match status" value="1"/>
</dbReference>
<dbReference type="FunFam" id="1.20.5.320:FF:000002">
    <property type="entry name" value="6-phosphogluconate dehydrogenase, decarboxylating"/>
    <property type="match status" value="1"/>
</dbReference>
<dbReference type="FunFam" id="3.40.50.720:FF:000007">
    <property type="entry name" value="6-phosphogluconate dehydrogenase, decarboxylating"/>
    <property type="match status" value="1"/>
</dbReference>
<dbReference type="Gene3D" id="1.20.5.320">
    <property type="entry name" value="6-Phosphogluconate Dehydrogenase, domain 3"/>
    <property type="match status" value="1"/>
</dbReference>
<dbReference type="Gene3D" id="1.10.1040.10">
    <property type="entry name" value="N-(1-d-carboxylethyl)-l-norvaline Dehydrogenase, domain 2"/>
    <property type="match status" value="1"/>
</dbReference>
<dbReference type="Gene3D" id="3.40.50.720">
    <property type="entry name" value="NAD(P)-binding Rossmann-like Domain"/>
    <property type="match status" value="1"/>
</dbReference>
<dbReference type="InterPro" id="IPR008927">
    <property type="entry name" value="6-PGluconate_DH-like_C_sf"/>
</dbReference>
<dbReference type="InterPro" id="IPR013328">
    <property type="entry name" value="6PGD_dom2"/>
</dbReference>
<dbReference type="InterPro" id="IPR006114">
    <property type="entry name" value="6PGDH_C"/>
</dbReference>
<dbReference type="InterPro" id="IPR006113">
    <property type="entry name" value="6PGDH_Gnd/GntZ"/>
</dbReference>
<dbReference type="InterPro" id="IPR006115">
    <property type="entry name" value="6PGDH_NADP-bd"/>
</dbReference>
<dbReference type="InterPro" id="IPR006184">
    <property type="entry name" value="6PGdom_BS"/>
</dbReference>
<dbReference type="InterPro" id="IPR036291">
    <property type="entry name" value="NAD(P)-bd_dom_sf"/>
</dbReference>
<dbReference type="InterPro" id="IPR006183">
    <property type="entry name" value="Pgluconate_DH"/>
</dbReference>
<dbReference type="NCBIfam" id="TIGR00873">
    <property type="entry name" value="gnd"/>
    <property type="match status" value="1"/>
</dbReference>
<dbReference type="NCBIfam" id="NF006765">
    <property type="entry name" value="PRK09287.1"/>
    <property type="match status" value="1"/>
</dbReference>
<dbReference type="PANTHER" id="PTHR11811">
    <property type="entry name" value="6-PHOSPHOGLUCONATE DEHYDROGENASE"/>
    <property type="match status" value="1"/>
</dbReference>
<dbReference type="Pfam" id="PF00393">
    <property type="entry name" value="6PGD"/>
    <property type="match status" value="1"/>
</dbReference>
<dbReference type="Pfam" id="PF03446">
    <property type="entry name" value="NAD_binding_2"/>
    <property type="match status" value="1"/>
</dbReference>
<dbReference type="PIRSF" id="PIRSF000109">
    <property type="entry name" value="6PGD"/>
    <property type="match status" value="1"/>
</dbReference>
<dbReference type="PRINTS" id="PR00076">
    <property type="entry name" value="6PGDHDRGNASE"/>
</dbReference>
<dbReference type="SMART" id="SM01350">
    <property type="entry name" value="6PGD"/>
    <property type="match status" value="1"/>
</dbReference>
<dbReference type="SUPFAM" id="SSF48179">
    <property type="entry name" value="6-phosphogluconate dehydrogenase C-terminal domain-like"/>
    <property type="match status" value="1"/>
</dbReference>
<dbReference type="SUPFAM" id="SSF51735">
    <property type="entry name" value="NAD(P)-binding Rossmann-fold domains"/>
    <property type="match status" value="1"/>
</dbReference>
<dbReference type="PROSITE" id="PS00461">
    <property type="entry name" value="6PGD"/>
    <property type="match status" value="1"/>
</dbReference>
<organism>
    <name type="scientific">Cunninghamella elegans</name>
    <dbReference type="NCBI Taxonomy" id="4853"/>
    <lineage>
        <taxon>Eukaryota</taxon>
        <taxon>Fungi</taxon>
        <taxon>Fungi incertae sedis</taxon>
        <taxon>Mucoromycota</taxon>
        <taxon>Mucoromycotina</taxon>
        <taxon>Mucoromycetes</taxon>
        <taxon>Mucorales</taxon>
        <taxon>Cunninghamellaceae</taxon>
        <taxon>Cunninghamella</taxon>
    </lineage>
</organism>
<protein>
    <recommendedName>
        <fullName>6-phosphogluconate dehydrogenase, decarboxylating</fullName>
        <ecNumber>1.1.1.44</ecNumber>
    </recommendedName>
</protein>
<gene>
    <name type="primary">6-PGD</name>
</gene>
<comment type="function">
    <text evidence="1">Catalyzes the oxidative decarboxylation of 6-phosphogluconate to ribulose 5-phosphate and CO(2), with concomitant reduction of NADP to NADPH.</text>
</comment>
<comment type="catalytic activity">
    <reaction>
        <text>6-phospho-D-gluconate + NADP(+) = D-ribulose 5-phosphate + CO2 + NADPH</text>
        <dbReference type="Rhea" id="RHEA:10116"/>
        <dbReference type="ChEBI" id="CHEBI:16526"/>
        <dbReference type="ChEBI" id="CHEBI:57783"/>
        <dbReference type="ChEBI" id="CHEBI:58121"/>
        <dbReference type="ChEBI" id="CHEBI:58349"/>
        <dbReference type="ChEBI" id="CHEBI:58759"/>
        <dbReference type="EC" id="1.1.1.44"/>
    </reaction>
</comment>
<comment type="pathway">
    <text>Carbohydrate degradation; pentose phosphate pathway; D-ribulose 5-phosphate from D-glucose 6-phosphate (oxidative stage): step 3/3.</text>
</comment>
<comment type="subunit">
    <text evidence="1">Homodimer.</text>
</comment>
<comment type="similarity">
    <text evidence="2">Belongs to the 6-phosphogluconate dehydrogenase family.</text>
</comment>
<proteinExistence type="evidence at transcript level"/>
<reference key="1">
    <citation type="journal article" date="1998" name="FEMS Microbiol. Lett.">
        <title>Identification and sequencing of a cDNA encoding 6-phosphogluconate dehydrogenase from a fungus, Cunninghamella elegans and expression of the gene in Escherichia coli.</title>
        <authorList>
            <person name="Wang R.F."/>
            <person name="Khan A.A."/>
            <person name="Cao W.W."/>
            <person name="Cerniglia C.E."/>
        </authorList>
    </citation>
    <scope>NUCLEOTIDE SEQUENCE [MRNA]</scope>
    <source>
        <strain>ATCC 36112 / DSM 8217 / PA-1</strain>
    </source>
</reference>
<sequence>MVEAVADIGLIGLAVMGQNLILNMNDHGFVVCAYNRTTSKVDDFLANEAKGTNVVGAHSVEELCAKLKRPRKVMLLVKAGSAVDAFIDQLLPHLEEGDIIIDGGNSHFPDSIRRTKELEAKGILFVGSGVSGGEEGARYGPSLMPGGNSKAWEHIQPIFQAIAAKAPDGASCCEWVGETGAGHYVKMVHNGIEYGDMQLITEVYQILHEGLGLSHDEMADIFEEWNKGDLDSFLIEITRDILRFKDTDGQPLVTKIRDTAGQKGTGKWTAIDSLDRGIPVTLIGEAVYSRCLSSLKDERVRASKILQGPSSSKFTGDKKTFIAQLGQALYAAKIVSYAQGYMLMRQAAKDYEWKLNNAGIALMWRGGCIIRSVFLGKIRDAYTKNPELENLLFDDFFKDATAKAQDAWRNVTAQAVLMGIPTPALSTALNFYDGLRHEILPANLLQAQRDYFGAHTYELLHTPGKWVHTNWTGRGGNVSASTYDA</sequence>
<accession>O60037</accession>
<keyword id="KW-0311">Gluconate utilization</keyword>
<keyword id="KW-0521">NADP</keyword>
<keyword id="KW-0560">Oxidoreductase</keyword>
<keyword id="KW-0570">Pentose shunt</keyword>
<evidence type="ECO:0000250" key="1"/>
<evidence type="ECO:0000305" key="2"/>